<feature type="chain" id="PRO_0000047495" description="Zinc finger protein 268">
    <location>
        <begin position="1"/>
        <end position="947"/>
    </location>
</feature>
<feature type="domain" description="KRAB" evidence="2">
    <location>
        <begin position="81"/>
        <end position="152"/>
    </location>
</feature>
<feature type="zinc finger region" description="C2H2-type 1" evidence="1">
    <location>
        <begin position="276"/>
        <end position="298"/>
    </location>
</feature>
<feature type="zinc finger region" description="C2H2-type 2" evidence="1">
    <location>
        <begin position="304"/>
        <end position="326"/>
    </location>
</feature>
<feature type="zinc finger region" description="C2H2-type 3" evidence="1">
    <location>
        <begin position="332"/>
        <end position="354"/>
    </location>
</feature>
<feature type="zinc finger region" description="C2H2-type 4" evidence="1">
    <location>
        <begin position="360"/>
        <end position="382"/>
    </location>
</feature>
<feature type="zinc finger region" description="C2H2-type 5" evidence="1">
    <location>
        <begin position="388"/>
        <end position="410"/>
    </location>
</feature>
<feature type="zinc finger region" description="C2H2-type 6" evidence="1">
    <location>
        <begin position="416"/>
        <end position="438"/>
    </location>
</feature>
<feature type="zinc finger region" description="C2H2-type 7" evidence="1">
    <location>
        <begin position="444"/>
        <end position="466"/>
    </location>
</feature>
<feature type="zinc finger region" description="C2H2-type 8" evidence="1">
    <location>
        <begin position="472"/>
        <end position="494"/>
    </location>
</feature>
<feature type="zinc finger region" description="C2H2-type 9" evidence="1">
    <location>
        <begin position="500"/>
        <end position="522"/>
    </location>
</feature>
<feature type="zinc finger region" description="C2H2-type 10" evidence="1">
    <location>
        <begin position="528"/>
        <end position="550"/>
    </location>
</feature>
<feature type="zinc finger region" description="C2H2-type 11" evidence="1">
    <location>
        <begin position="556"/>
        <end position="578"/>
    </location>
</feature>
<feature type="zinc finger region" description="C2H2-type 12" evidence="1">
    <location>
        <begin position="584"/>
        <end position="606"/>
    </location>
</feature>
<feature type="zinc finger region" description="C2H2-type 13" evidence="1">
    <location>
        <begin position="612"/>
        <end position="634"/>
    </location>
</feature>
<feature type="zinc finger region" description="C2H2-type 14" evidence="1">
    <location>
        <begin position="640"/>
        <end position="662"/>
    </location>
</feature>
<feature type="zinc finger region" description="C2H2-type 15" evidence="1">
    <location>
        <begin position="668"/>
        <end position="690"/>
    </location>
</feature>
<feature type="zinc finger region" description="C2H2-type 16" evidence="1">
    <location>
        <begin position="696"/>
        <end position="718"/>
    </location>
</feature>
<feature type="zinc finger region" description="C2H2-type 17" evidence="1">
    <location>
        <begin position="724"/>
        <end position="746"/>
    </location>
</feature>
<feature type="zinc finger region" description="C2H2-type 18" evidence="1">
    <location>
        <begin position="752"/>
        <end position="774"/>
    </location>
</feature>
<feature type="zinc finger region" description="C2H2-type 19" evidence="1">
    <location>
        <begin position="780"/>
        <end position="802"/>
    </location>
</feature>
<feature type="zinc finger region" description="C2H2-type 20" evidence="1">
    <location>
        <begin position="808"/>
        <end position="830"/>
    </location>
</feature>
<feature type="zinc finger region" description="C2H2-type 21" evidence="1">
    <location>
        <begin position="836"/>
        <end position="858"/>
    </location>
</feature>
<feature type="zinc finger region" description="C2H2-type 22" evidence="1">
    <location>
        <begin position="864"/>
        <end position="886"/>
    </location>
</feature>
<feature type="zinc finger region" description="C2H2-type 23" evidence="1">
    <location>
        <begin position="892"/>
        <end position="914"/>
    </location>
</feature>
<feature type="zinc finger region" description="C2H2-type 24" evidence="1">
    <location>
        <begin position="920"/>
        <end position="942"/>
    </location>
</feature>
<feature type="modified residue" description="Phosphoserine; by TBK1" evidence="15">
    <location>
        <position position="178"/>
    </location>
</feature>
<feature type="splice variant" id="VSP_006909" description="In isoform 2." evidence="16 17">
    <location>
        <begin position="1"/>
        <end position="161"/>
    </location>
</feature>
<feature type="splice variant" id="VSP_053461" description="In isoform 3." evidence="18 19">
    <location>
        <begin position="1"/>
        <end position="140"/>
    </location>
</feature>
<feature type="splice variant" id="VSP_053462" description="In isoform 4." evidence="18 19">
    <original>VPPLQERNSSWDRIRKLQGQESILGQGTPGLQPLPGTPRQKQKSRRIEKVLEWLFISQEQPKITKSWGPLSFMDVFVDFTWEEWQLLD</original>
    <variation>GTNTPNLISSSSWNKEKSCVWCRPKFQIRPVQTQSGKLMILWIGIRKIKTSWEVWQKALNALHLENYVFLVQSIFQDKNLINVARMERV</variation>
    <location>
        <begin position="12"/>
        <end position="99"/>
    </location>
</feature>
<feature type="splice variant" id="VSP_053463" description="In isoform 7." evidence="18 19">
    <location>
        <begin position="12"/>
        <end position="78"/>
    </location>
</feature>
<feature type="splice variant" id="VSP_053464" description="In isoform 6." evidence="18 19">
    <original>VPPLQERNSSWDRIRKLQGQESILGQGTPGLQP</original>
    <variation>GTNTPNLISSSSWNKEKSCVWCRPKFQIRPVQF</variation>
    <location>
        <begin position="12"/>
        <end position="44"/>
    </location>
</feature>
<feature type="splice variant" id="VSP_053465" description="In isoform 6." evidence="18 19">
    <location>
        <begin position="45"/>
        <end position="947"/>
    </location>
</feature>
<feature type="splice variant" id="VSP_053466" description="In isoform 5." evidence="18 19">
    <original>GPLSFMDVFVDFTWEEWQLLDPAQKCLYRSVMLENYSNLVSLGYQHTKPDIIFKLEQ</original>
    <variation>TQSGKLMILWIGIRKIKTSWEVRQKALNALHLENYVFLVQSIFQDKNLINVARMERV</variation>
    <location>
        <begin position="79"/>
        <end position="135"/>
    </location>
</feature>
<feature type="splice variant" id="VSP_053467" description="In isoform 4." evidence="18 19">
    <location>
        <begin position="100"/>
        <end position="947"/>
    </location>
</feature>
<feature type="splice variant" id="VSP_053468" description="In isoform 5." evidence="18 19">
    <location>
        <begin position="136"/>
        <end position="947"/>
    </location>
</feature>
<feature type="splice variant" id="VSP_053469" description="In isoform 7." evidence="18 19">
    <original>NTVWKIDDLMDWHQENKDKLGSTAKSFECTT</original>
    <variation>ILKAGKSKAKVLAGLVSGEGPLCASKMTPCC</variation>
    <location>
        <begin position="153"/>
        <end position="183"/>
    </location>
</feature>
<feature type="splice variant" id="VSP_053470" description="In isoform 7." evidence="18 19">
    <location>
        <begin position="184"/>
        <end position="947"/>
    </location>
</feature>
<feature type="splice variant" id="VSP_053471" description="In isoform 3." evidence="18 19">
    <location>
        <begin position="222"/>
        <end position="947"/>
    </location>
</feature>
<feature type="sequence variant" id="VAR_033562" description="In dbSNP:rs7975069.">
    <original>T</original>
    <variation>M</variation>
    <location>
        <position position="175"/>
    </location>
</feature>
<feature type="mutagenesis site" description="Strongly reduces nuclear localization and interaction with TRIM28; when associated with A-86." evidence="13">
    <original>D</original>
    <variation>A</variation>
    <location>
        <position position="85"/>
    </location>
</feature>
<feature type="mutagenesis site" description="Reduces nuclear localization. Strongly reduces nuclear localization and interaction with TRIM28; when associated with A-85." evidence="13">
    <original>V</original>
    <variation>A</variation>
    <location>
        <position position="86"/>
    </location>
</feature>
<feature type="mutagenesis site" description="Reduces nuclear localization." evidence="13">
    <original>V</original>
    <variation>A</variation>
    <location>
        <position position="88"/>
    </location>
</feature>
<feature type="mutagenesis site" description="Reduces nuclear localization." evidence="13">
    <original>F</original>
    <variation>A</variation>
    <location>
        <position position="90"/>
    </location>
</feature>
<feature type="mutagenesis site" description="Reduces nuclear localization. Strongly reduces nuclear localization; when associated with A-94 and A-95." evidence="13">
    <original>E</original>
    <variation>A</variation>
    <location>
        <position position="93"/>
    </location>
</feature>
<feature type="mutagenesis site" description="Reduces nuclear localization. Inhibits nuclear localization; when associated with A-93 and A-95." evidence="13">
    <original>E</original>
    <variation>A</variation>
    <location>
        <position position="94"/>
    </location>
</feature>
<feature type="mutagenesis site" description="Reduces nuclear localization. Inhibits nuclear localization; when associated with A-93 and A-94." evidence="13">
    <original>W</original>
    <variation>A</variation>
    <location>
        <position position="95"/>
    </location>
</feature>
<feature type="mutagenesis site" description="Loss of phosphorylation by TBK1." evidence="15">
    <original>S</original>
    <variation>A</variation>
    <location>
        <position position="178"/>
    </location>
</feature>
<feature type="mutagenesis site" description="Loss of interaction with TOLLIP." evidence="15">
    <original>S</original>
    <variation>D</variation>
    <location>
        <position position="178"/>
    </location>
</feature>
<feature type="sequence conflict" description="In Ref. 2; AAL99923." evidence="20" ref="2">
    <original>Q</original>
    <variation>P</variation>
    <location>
        <position position="323"/>
    </location>
</feature>
<feature type="sequence conflict" description="In Ref. 2; AAL99923." evidence="20" ref="2">
    <original>SE</original>
    <variation>IN</variation>
    <location>
        <begin position="335"/>
        <end position="336"/>
    </location>
</feature>
<feature type="sequence conflict" description="In Ref. 2; AAL99923." evidence="20" ref="2">
    <original>T</original>
    <variation>A</variation>
    <location>
        <position position="340"/>
    </location>
</feature>
<feature type="sequence conflict" description="In Ref. 2; AAL99923." evidence="20" ref="2">
    <original>H</original>
    <variation>Q</variation>
    <location>
        <position position="344"/>
    </location>
</feature>
<feature type="sequence conflict" description="In Ref. 2; AAL99923." evidence="20" ref="2">
    <original>C</original>
    <variation>D</variation>
    <location>
        <position position="363"/>
    </location>
</feature>
<feature type="sequence conflict" description="In Ref. 2; AAL99923." evidence="20" ref="2">
    <original>I</original>
    <variation>T</variation>
    <location>
        <position position="409"/>
    </location>
</feature>
<feature type="sequence conflict" description="In Ref. 2; AAL99923 and 6; CAA55526." evidence="20" ref="2 6">
    <original>R</original>
    <variation>T</variation>
    <location>
        <position position="860"/>
    </location>
</feature>
<feature type="strand" evidence="27">
    <location>
        <begin position="279"/>
        <end position="282"/>
    </location>
</feature>
<feature type="strand" evidence="27">
    <location>
        <begin position="284"/>
        <end position="287"/>
    </location>
</feature>
<feature type="helix" evidence="27">
    <location>
        <begin position="288"/>
        <end position="298"/>
    </location>
</feature>
<feature type="strand" evidence="26">
    <location>
        <begin position="304"/>
        <end position="306"/>
    </location>
</feature>
<feature type="turn" evidence="26">
    <location>
        <begin position="307"/>
        <end position="310"/>
    </location>
</feature>
<feature type="strand" evidence="26">
    <location>
        <begin position="311"/>
        <end position="315"/>
    </location>
</feature>
<feature type="helix" evidence="26">
    <location>
        <begin position="316"/>
        <end position="323"/>
    </location>
</feature>
<feature type="turn" evidence="26">
    <location>
        <begin position="324"/>
        <end position="326"/>
    </location>
</feature>
<feature type="strand" evidence="34">
    <location>
        <begin position="335"/>
        <end position="337"/>
    </location>
</feature>
<feature type="strand" evidence="34">
    <location>
        <begin position="340"/>
        <end position="343"/>
    </location>
</feature>
<feature type="helix" evidence="34">
    <location>
        <begin position="344"/>
        <end position="354"/>
    </location>
</feature>
<feature type="turn" evidence="35">
    <location>
        <begin position="363"/>
        <end position="366"/>
    </location>
</feature>
<feature type="helix" evidence="35">
    <location>
        <begin position="372"/>
        <end position="379"/>
    </location>
</feature>
<feature type="strand" evidence="35">
    <location>
        <begin position="382"/>
        <end position="385"/>
    </location>
</feature>
<feature type="strand" evidence="29">
    <location>
        <begin position="391"/>
        <end position="393"/>
    </location>
</feature>
<feature type="strand" evidence="29">
    <location>
        <begin position="396"/>
        <end position="399"/>
    </location>
</feature>
<feature type="helix" evidence="29">
    <location>
        <begin position="400"/>
        <end position="411"/>
    </location>
</feature>
<feature type="strand" evidence="32">
    <location>
        <begin position="415"/>
        <end position="417"/>
    </location>
</feature>
<feature type="turn" evidence="32">
    <location>
        <begin position="419"/>
        <end position="421"/>
    </location>
</feature>
<feature type="strand" evidence="32">
    <location>
        <begin position="424"/>
        <end position="426"/>
    </location>
</feature>
<feature type="helix" evidence="32">
    <location>
        <begin position="428"/>
        <end position="437"/>
    </location>
</feature>
<feature type="turn" evidence="32">
    <location>
        <begin position="438"/>
        <end position="440"/>
    </location>
</feature>
<feature type="strand" evidence="36">
    <location>
        <begin position="443"/>
        <end position="445"/>
    </location>
</feature>
<feature type="strand" evidence="36">
    <location>
        <begin position="447"/>
        <end position="449"/>
    </location>
</feature>
<feature type="strand" evidence="36">
    <location>
        <begin position="452"/>
        <end position="455"/>
    </location>
</feature>
<feature type="helix" evidence="36">
    <location>
        <begin position="456"/>
        <end position="465"/>
    </location>
</feature>
<feature type="turn" evidence="36">
    <location>
        <begin position="466"/>
        <end position="468"/>
    </location>
</feature>
<feature type="strand" evidence="31">
    <location>
        <begin position="495"/>
        <end position="500"/>
    </location>
</feature>
<feature type="turn" evidence="31">
    <location>
        <begin position="503"/>
        <end position="505"/>
    </location>
</feature>
<feature type="helix" evidence="31">
    <location>
        <begin position="512"/>
        <end position="519"/>
    </location>
</feature>
<feature type="turn" evidence="31">
    <location>
        <begin position="520"/>
        <end position="522"/>
    </location>
</feature>
<feature type="strand" evidence="41">
    <location>
        <begin position="527"/>
        <end position="529"/>
    </location>
</feature>
<feature type="strand" evidence="41">
    <location>
        <begin position="531"/>
        <end position="533"/>
    </location>
</feature>
<feature type="strand" evidence="41">
    <location>
        <begin position="536"/>
        <end position="539"/>
    </location>
</feature>
<feature type="helix" evidence="41">
    <location>
        <begin position="540"/>
        <end position="547"/>
    </location>
</feature>
<feature type="turn" evidence="41">
    <location>
        <begin position="548"/>
        <end position="550"/>
    </location>
</feature>
<feature type="strand" evidence="28">
    <location>
        <begin position="559"/>
        <end position="561"/>
    </location>
</feature>
<feature type="strand" evidence="28">
    <location>
        <begin position="564"/>
        <end position="567"/>
    </location>
</feature>
<feature type="helix" evidence="28">
    <location>
        <begin position="568"/>
        <end position="578"/>
    </location>
</feature>
<feature type="turn" evidence="37">
    <location>
        <begin position="587"/>
        <end position="589"/>
    </location>
</feature>
<feature type="strand" evidence="37">
    <location>
        <begin position="592"/>
        <end position="596"/>
    </location>
</feature>
<feature type="helix" evidence="37">
    <location>
        <begin position="597"/>
        <end position="606"/>
    </location>
</feature>
<feature type="strand" evidence="42">
    <location>
        <begin position="611"/>
        <end position="613"/>
    </location>
</feature>
<feature type="strand" evidence="42">
    <location>
        <begin position="615"/>
        <end position="617"/>
    </location>
</feature>
<feature type="strand" evidence="42">
    <location>
        <begin position="620"/>
        <end position="623"/>
    </location>
</feature>
<feature type="helix" evidence="42">
    <location>
        <begin position="624"/>
        <end position="632"/>
    </location>
</feature>
<feature type="strand" evidence="24">
    <location>
        <begin position="639"/>
        <end position="642"/>
    </location>
</feature>
<feature type="turn" evidence="24">
    <location>
        <begin position="643"/>
        <end position="646"/>
    </location>
</feature>
<feature type="strand" evidence="24">
    <location>
        <begin position="647"/>
        <end position="651"/>
    </location>
</feature>
<feature type="helix" evidence="24">
    <location>
        <begin position="652"/>
        <end position="659"/>
    </location>
</feature>
<feature type="turn" evidence="24">
    <location>
        <begin position="660"/>
        <end position="662"/>
    </location>
</feature>
<feature type="strand" evidence="21">
    <location>
        <begin position="667"/>
        <end position="669"/>
    </location>
</feature>
<feature type="strand" evidence="21">
    <location>
        <begin position="671"/>
        <end position="674"/>
    </location>
</feature>
<feature type="strand" evidence="21">
    <location>
        <begin position="676"/>
        <end position="679"/>
    </location>
</feature>
<feature type="helix" evidence="21">
    <location>
        <begin position="680"/>
        <end position="686"/>
    </location>
</feature>
<feature type="helix" evidence="21">
    <location>
        <begin position="687"/>
        <end position="689"/>
    </location>
</feature>
<feature type="strand" evidence="21">
    <location>
        <begin position="690"/>
        <end position="692"/>
    </location>
</feature>
<feature type="strand" evidence="33">
    <location>
        <begin position="699"/>
        <end position="701"/>
    </location>
</feature>
<feature type="helix" evidence="33">
    <location>
        <begin position="708"/>
        <end position="719"/>
    </location>
</feature>
<feature type="turn" evidence="38">
    <location>
        <begin position="727"/>
        <end position="729"/>
    </location>
</feature>
<feature type="helix" evidence="38">
    <location>
        <begin position="736"/>
        <end position="743"/>
    </location>
</feature>
<feature type="turn" evidence="38">
    <location>
        <begin position="744"/>
        <end position="748"/>
    </location>
</feature>
<feature type="strand" evidence="22">
    <location>
        <begin position="751"/>
        <end position="753"/>
    </location>
</feature>
<feature type="strand" evidence="22">
    <location>
        <begin position="755"/>
        <end position="757"/>
    </location>
</feature>
<feature type="strand" evidence="22">
    <location>
        <begin position="760"/>
        <end position="763"/>
    </location>
</feature>
<feature type="helix" evidence="22">
    <location>
        <begin position="764"/>
        <end position="771"/>
    </location>
</feature>
<feature type="helix" evidence="22">
    <location>
        <begin position="772"/>
        <end position="774"/>
    </location>
</feature>
<feature type="strand" evidence="43">
    <location>
        <begin position="783"/>
        <end position="785"/>
    </location>
</feature>
<feature type="helix" evidence="43">
    <location>
        <begin position="792"/>
        <end position="799"/>
    </location>
</feature>
<feature type="turn" evidence="43">
    <location>
        <begin position="800"/>
        <end position="802"/>
    </location>
</feature>
<feature type="strand" evidence="39">
    <location>
        <begin position="807"/>
        <end position="809"/>
    </location>
</feature>
<feature type="strand" evidence="39">
    <location>
        <begin position="811"/>
        <end position="813"/>
    </location>
</feature>
<feature type="strand" evidence="39">
    <location>
        <begin position="816"/>
        <end position="819"/>
    </location>
</feature>
<feature type="helix" evidence="39">
    <location>
        <begin position="820"/>
        <end position="827"/>
    </location>
</feature>
<feature type="helix" evidence="39">
    <location>
        <begin position="828"/>
        <end position="830"/>
    </location>
</feature>
<feature type="strand" evidence="23">
    <location>
        <begin position="835"/>
        <end position="837"/>
    </location>
</feature>
<feature type="strand" evidence="23">
    <location>
        <begin position="839"/>
        <end position="842"/>
    </location>
</feature>
<feature type="strand" evidence="23">
    <location>
        <begin position="844"/>
        <end position="847"/>
    </location>
</feature>
<feature type="helix" evidence="23">
    <location>
        <begin position="848"/>
        <end position="855"/>
    </location>
</feature>
<feature type="helix" evidence="23">
    <location>
        <begin position="856"/>
        <end position="858"/>
    </location>
</feature>
<feature type="strand" evidence="25">
    <location>
        <begin position="862"/>
        <end position="865"/>
    </location>
</feature>
<feature type="strand" evidence="25">
    <location>
        <begin position="867"/>
        <end position="869"/>
    </location>
</feature>
<feature type="strand" evidence="25">
    <location>
        <begin position="872"/>
        <end position="875"/>
    </location>
</feature>
<feature type="helix" evidence="25">
    <location>
        <begin position="876"/>
        <end position="886"/>
    </location>
</feature>
<feature type="turn" evidence="30">
    <location>
        <begin position="895"/>
        <end position="897"/>
    </location>
</feature>
<feature type="strand" evidence="30">
    <location>
        <begin position="900"/>
        <end position="903"/>
    </location>
</feature>
<feature type="helix" evidence="30">
    <location>
        <begin position="904"/>
        <end position="914"/>
    </location>
</feature>
<feature type="strand" evidence="40">
    <location>
        <begin position="919"/>
        <end position="921"/>
    </location>
</feature>
<feature type="strand" evidence="40">
    <location>
        <begin position="923"/>
        <end position="925"/>
    </location>
</feature>
<feature type="strand" evidence="40">
    <location>
        <begin position="928"/>
        <end position="932"/>
    </location>
</feature>
<feature type="helix" evidence="40">
    <location>
        <begin position="933"/>
        <end position="941"/>
    </location>
</feature>
<comment type="function">
    <molecule>Isoform 1</molecule>
    <text>Acts as a transcriptional repressor. Inhibits erythroid differentiation and tumor cell proliferation. Plays a role during ovarian cancer development and progression.</text>
</comment>
<comment type="function">
    <molecule>Isoform 2</molecule>
    <text>Contributes to cervical carcinogenesis in part through the TNF-alpha-induced NF-kappa-B signaling pathway by interacting with the I-kappa-B-kinase (IKK) core complex.</text>
</comment>
<comment type="function">
    <text evidence="15">Involved in the regulation of antiviral interferon signaling. During viral infection, recruits SETD4 to TBK1, leading to TBK1 monomethylation, which is critical for the assembly of TBK1 complex and IRF3 signaling.</text>
</comment>
<comment type="subunit">
    <text evidence="12 13 15">Interacts (via the KRAB domain) with TRIM28 (via the RBCC domain); the interaction increases ZNF268 nuclear localization activity. Isoform 2 interacts with CHUK and IKBKB; the interaction is further increased in a TNF-alpha-dependent manner. Interacts with TOLLIP; this interaction is impaired by ZNF268 phosphorylation at Ser-178 (PubMed:37926288). Forms a ternary complex with TBK1 and SETD4; the interaction between SETD4 and TBK1 is ZNF268-dependent and leads to TBK1 monomethylation (PubMed:37926288).</text>
</comment>
<comment type="subcellular location">
    <molecule>Isoform 1</molecule>
    <subcellularLocation>
        <location evidence="13">Nucleus</location>
    </subcellularLocation>
</comment>
<comment type="subcellular location">
    <molecule>Isoform 2</molecule>
    <subcellularLocation>
        <location evidence="13">Nucleus</location>
    </subcellularLocation>
    <subcellularLocation>
        <location evidence="13">Cytoplasm</location>
    </subcellularLocation>
</comment>
<comment type="subcellular location">
    <subcellularLocation>
        <location evidence="15">Cytoplasm</location>
    </subcellularLocation>
    <text evidence="15">Under resting conditions, degraded by autophagosomes in the cytosol, resulting in low expression at the protein level. Accumulates in the cytoplasm during viral infection.</text>
</comment>
<comment type="alternative products">
    <event type="alternative splicing"/>
    <isoform>
        <id>Q14587-1</id>
        <name>1</name>
        <name>ZNF268a</name>
        <name>KW-4 variant-1</name>
        <sequence type="displayed"/>
    </isoform>
    <isoform>
        <id>Q14587-2</id>
        <name>2</name>
        <name>ZNF268s</name>
        <name>KW-4 variant-2</name>
        <sequence type="described" ref="VSP_006909"/>
    </isoform>
    <isoform>
        <id>Q14587-3</id>
        <name>3</name>
        <name>ZNF268c</name>
        <sequence type="described" ref="VSP_053461 VSP_053471"/>
    </isoform>
    <isoform>
        <id>Q14587-4</id>
        <name>4</name>
        <name>ZNF268d</name>
        <sequence type="described" ref="VSP_053462 VSP_053467"/>
    </isoform>
    <isoform>
        <id>Q14587-6</id>
        <name>5</name>
        <name>ZNF268e</name>
        <sequence type="described" ref="VSP_053466 VSP_053468"/>
    </isoform>
    <isoform>
        <id>Q14587-7</id>
        <name>6</name>
        <name>ZNF268f</name>
        <sequence type="described" ref="VSP_053464 VSP_053465"/>
    </isoform>
    <isoform>
        <id>Q14587-8</id>
        <name>7</name>
        <name>ZNF268g</name>
        <sequence type="described" ref="VSP_053463 VSP_053469 VSP_053470"/>
    </isoform>
</comment>
<comment type="tissue specificity">
    <text evidence="3 5 7 10 12 14">Overexpressed in ovarian cancer tissues compared to normal ovarian tissues. Isoform 1 and isoform 2 are expressed in squamous epithelium tissues. Isoform 2 is overexpressed in squamous cervical cancer (at protein level). Expressed in blood cells. Isoform 1 is expressed in pancreas, lung, skeletal muscle, heart, placenta, liver, kidney and brain. Isoform 2 expressed in chronic lymphocytic leukemia (CLL) and several tumor cell lines. Isoform 3 is expressed in several tumor cells. Isoform 5 is expressed in fetal liver and several tumor cells. Isoform 6 is weakly expressed in brain, lung amd small intestin and in several tumor cells. Isoform 7 is expressed in fetal liver and several tumor cells.</text>
</comment>
<comment type="developmental stage">
    <text evidence="4 5">Expressed in fetal liver from 5 weeks until 4 months but drastically reduced by 6 months and became non-detectable by 7 months. Expressed in hematopoietic stem cells in 3 weeks and 5 weeks (at protein level). Expressed in fetal liver.</text>
</comment>
<comment type="induction">
    <text evidence="6 8 9 11">Down-regulated during erythroid differentiation by GATA1. Down-regulated by HTLV-1 Tax through the CREB/ATF pathway. Up-regulated by the regulator of nonsense transcript UPF1. Up-regulated by the cyclic AMP-dependent transcription factor ATF4.</text>
</comment>
<comment type="domain">
    <text>The KRAB domain functions to reinforce the nuclear localization of isoform 1 in addition to its transcription repression activity.</text>
</comment>
<comment type="PTM">
    <text evidence="15">Phosphorylation at Ser-178 stabilizes the protein by interfering with its binding to TOLLIP, hence impairing its degradation by Tollip-mediated selective autophagy system.</text>
</comment>
<comment type="similarity">
    <text evidence="20">Belongs to the krueppel C2H2-type zinc-finger protein family.</text>
</comment>
<name>ZN268_HUMAN</name>
<sequence>MATRVRTASIWVPPLQERNSSWDRIRKLQGQESILGQGTPGLQPLPGTPRQKQKSRRIEKVLEWLFISQEQPKITKSWGPLSFMDVFVDFTWEEWQLLDPAQKCLYRSVMLENYSNLVSLGYQHTKPDIIFKLEQGEELCMVQAQVPNQTCPNTVWKIDDLMDWHQENKDKLGSTAKSFECTTFGKLCLLSTKYLSRQKPHKCGTHGKSLKYIDFTSDYARNNPNGFQVHGKSFFHSKHEQTVIGIKYCESIESGKTVNKKSQLMCQQMYMGEKPFGCSCCEKAFSSKSYLLVHQQTHAEEKPYGCNECGKDFSSKSYLIVHQRIHTGEKLHECSECRKTFSFHSQLVIHQRIHTGENPYECCECGKVFSRKDQLVSHQKTHSGQKPYVCNECGKAFGLKSQLIIHERIHTGEKPYECNECQKAFNTKSNLMVHQRTHTGEKPYVCSDCGKAFTFKSQLIVHQGIHTGVKPYGCIQCGKGFSLKSQLIVHQRSHTGMKPYVCNECGKAFRSKSYLIIHTRTHTGEKLHECNNCGKAFSFKSQLIIHQRIHTGENPYECHECGKAFSRKYQLISHQRTHAGEKPYECTDCGKAFGLKSQLIIHQRTHTGEKPFECSECQKAFNTKSNLIVHQRTHTGEKPYSCNECGKAFTFKSQLIVHKGVHTGVKPYGCSQCAKTFSLKSQLIVHQRSHTGVKPYGCSECGKAFRSKSYLIIHMRTHTGEKPHECRECGKSFSFNSQLIVHQRIHTGENPYECSECGKAFNRKDQLISHQRTHAGEKPYGCSECGKAFSSKSYLIIHMRTHSGEKPYECNECGKAFIWKSLLIVHERTHAGVNPYKCSQCEKSFSGKLRLLVHQRMHTREKPYECSECGKAFIRNSQLIVHQRTHSGEKPYGCNECGKTFSQKSILSAHQRTHTGEKPCKCTECGKAFCWKSQLIMHQRTHVDDKH</sequence>
<gene>
    <name type="primary">ZNF268</name>
</gene>
<evidence type="ECO:0000255" key="1">
    <source>
        <dbReference type="PROSITE-ProRule" id="PRU00042"/>
    </source>
</evidence>
<evidence type="ECO:0000255" key="2">
    <source>
        <dbReference type="PROSITE-ProRule" id="PRU00119"/>
    </source>
</evidence>
<evidence type="ECO:0000269" key="3">
    <source>
    </source>
</evidence>
<evidence type="ECO:0000269" key="4">
    <source>
    </source>
</evidence>
<evidence type="ECO:0000269" key="5">
    <source>
    </source>
</evidence>
<evidence type="ECO:0000269" key="6">
    <source>
    </source>
</evidence>
<evidence type="ECO:0000269" key="7">
    <source>
    </source>
</evidence>
<evidence type="ECO:0000269" key="8">
    <source>
    </source>
</evidence>
<evidence type="ECO:0000269" key="9">
    <source>
    </source>
</evidence>
<evidence type="ECO:0000269" key="10">
    <source>
    </source>
</evidence>
<evidence type="ECO:0000269" key="11">
    <source>
    </source>
</evidence>
<evidence type="ECO:0000269" key="12">
    <source>
    </source>
</evidence>
<evidence type="ECO:0000269" key="13">
    <source>
    </source>
</evidence>
<evidence type="ECO:0000269" key="14">
    <source>
    </source>
</evidence>
<evidence type="ECO:0000269" key="15">
    <source>
    </source>
</evidence>
<evidence type="ECO:0000303" key="16">
    <source>
    </source>
</evidence>
<evidence type="ECO:0000303" key="17">
    <source>
    </source>
</evidence>
<evidence type="ECO:0000303" key="18">
    <source>
    </source>
</evidence>
<evidence type="ECO:0000303" key="19">
    <source>
    </source>
</evidence>
<evidence type="ECO:0000305" key="20"/>
<evidence type="ECO:0007829" key="21">
    <source>
        <dbReference type="PDB" id="2EL4"/>
    </source>
</evidence>
<evidence type="ECO:0007829" key="22">
    <source>
        <dbReference type="PDB" id="2EL5"/>
    </source>
</evidence>
<evidence type="ECO:0007829" key="23">
    <source>
        <dbReference type="PDB" id="2EL6"/>
    </source>
</evidence>
<evidence type="ECO:0007829" key="24">
    <source>
        <dbReference type="PDB" id="2EM1"/>
    </source>
</evidence>
<evidence type="ECO:0007829" key="25">
    <source>
        <dbReference type="PDB" id="2EMV"/>
    </source>
</evidence>
<evidence type="ECO:0007829" key="26">
    <source>
        <dbReference type="PDB" id="2EMW"/>
    </source>
</evidence>
<evidence type="ECO:0007829" key="27">
    <source>
        <dbReference type="PDB" id="2EMX"/>
    </source>
</evidence>
<evidence type="ECO:0007829" key="28">
    <source>
        <dbReference type="PDB" id="2EMY"/>
    </source>
</evidence>
<evidence type="ECO:0007829" key="29">
    <source>
        <dbReference type="PDB" id="2EN0"/>
    </source>
</evidence>
<evidence type="ECO:0007829" key="30">
    <source>
        <dbReference type="PDB" id="2EN6"/>
    </source>
</evidence>
<evidence type="ECO:0007829" key="31">
    <source>
        <dbReference type="PDB" id="2EN7"/>
    </source>
</evidence>
<evidence type="ECO:0007829" key="32">
    <source>
        <dbReference type="PDB" id="2EOF"/>
    </source>
</evidence>
<evidence type="ECO:0007829" key="33">
    <source>
        <dbReference type="PDB" id="2EOG"/>
    </source>
</evidence>
<evidence type="ECO:0007829" key="34">
    <source>
        <dbReference type="PDB" id="2EOI"/>
    </source>
</evidence>
<evidence type="ECO:0007829" key="35">
    <source>
        <dbReference type="PDB" id="2EOJ"/>
    </source>
</evidence>
<evidence type="ECO:0007829" key="36">
    <source>
        <dbReference type="PDB" id="2EOK"/>
    </source>
</evidence>
<evidence type="ECO:0007829" key="37">
    <source>
        <dbReference type="PDB" id="2EOL"/>
    </source>
</evidence>
<evidence type="ECO:0007829" key="38">
    <source>
        <dbReference type="PDB" id="2EOP"/>
    </source>
</evidence>
<evidence type="ECO:0007829" key="39">
    <source>
        <dbReference type="PDB" id="2EPV"/>
    </source>
</evidence>
<evidence type="ECO:0007829" key="40">
    <source>
        <dbReference type="PDB" id="2EPW"/>
    </source>
</evidence>
<evidence type="ECO:0007829" key="41">
    <source>
        <dbReference type="PDB" id="2EPY"/>
    </source>
</evidence>
<evidence type="ECO:0007829" key="42">
    <source>
        <dbReference type="PDB" id="2YTF"/>
    </source>
</evidence>
<evidence type="ECO:0007829" key="43">
    <source>
        <dbReference type="PDB" id="2YTQ"/>
    </source>
</evidence>
<accession>Q14587</accession>
<accession>Q8TDG8</accession>
<accession>Q96RH4</accession>
<accession>Q9BZJ9</accession>
<dbReference type="EMBL" id="AF317549">
    <property type="protein sequence ID" value="AAG59817.1"/>
    <property type="molecule type" value="mRNA"/>
</dbReference>
<dbReference type="EMBL" id="AF385187">
    <property type="protein sequence ID" value="AAK69307.1"/>
    <property type="molecule type" value="mRNA"/>
</dbReference>
<dbReference type="EMBL" id="AF432217">
    <property type="protein sequence ID" value="AAL99923.1"/>
    <property type="molecule type" value="mRNA"/>
</dbReference>
<dbReference type="EMBL" id="AC026785">
    <property type="status" value="NOT_ANNOTATED_CDS"/>
    <property type="molecule type" value="Genomic_DNA"/>
</dbReference>
<dbReference type="EMBL" id="DQ057356">
    <property type="status" value="NOT_ANNOTATED_CDS"/>
    <property type="molecule type" value="mRNA"/>
</dbReference>
<dbReference type="EMBL" id="DQ057357">
    <property type="status" value="NOT_ANNOTATED_CDS"/>
    <property type="molecule type" value="mRNA"/>
</dbReference>
<dbReference type="EMBL" id="DQ057358">
    <property type="status" value="NOT_ANNOTATED_CDS"/>
    <property type="molecule type" value="mRNA"/>
</dbReference>
<dbReference type="EMBL" id="DQ057359">
    <property type="status" value="NOT_ANNOTATED_CDS"/>
    <property type="molecule type" value="mRNA"/>
</dbReference>
<dbReference type="EMBL" id="DQ057360">
    <property type="status" value="NOT_ANNOTATED_CDS"/>
    <property type="molecule type" value="mRNA"/>
</dbReference>
<dbReference type="EMBL" id="X78926">
    <property type="protein sequence ID" value="CAA55526.1"/>
    <property type="molecule type" value="mRNA"/>
</dbReference>
<dbReference type="CCDS" id="CCDS45012.1">
    <molecule id="Q14587-1"/>
</dbReference>
<dbReference type="CCDS" id="CCDS53853.1">
    <molecule id="Q14587-4"/>
</dbReference>
<dbReference type="CCDS" id="CCDS59240.1">
    <molecule id="Q14587-6"/>
</dbReference>
<dbReference type="PIR" id="S47071">
    <property type="entry name" value="S47071"/>
</dbReference>
<dbReference type="RefSeq" id="NP_001159353.1">
    <molecule id="Q14587-1"/>
    <property type="nucleotide sequence ID" value="NM_001165881.3"/>
</dbReference>
<dbReference type="RefSeq" id="NP_001159355.1">
    <molecule id="Q14587-6"/>
    <property type="nucleotide sequence ID" value="NM_001165883.2"/>
</dbReference>
<dbReference type="RefSeq" id="NP_001159356.2">
    <property type="nucleotide sequence ID" value="NM_001165884.2"/>
</dbReference>
<dbReference type="RefSeq" id="NP_001159357.1">
    <property type="nucleotide sequence ID" value="NM_001165885.1"/>
</dbReference>
<dbReference type="RefSeq" id="NP_001159358.1">
    <property type="nucleotide sequence ID" value="NM_001165886.1"/>
</dbReference>
<dbReference type="RefSeq" id="NP_001159359.1">
    <property type="nucleotide sequence ID" value="NM_001165887.1"/>
</dbReference>
<dbReference type="RefSeq" id="NP_003406.1">
    <molecule id="Q14587-1"/>
    <property type="nucleotide sequence ID" value="NM_003415.3"/>
</dbReference>
<dbReference type="RefSeq" id="NP_694422.2">
    <property type="nucleotide sequence ID" value="NM_152943.2"/>
</dbReference>
<dbReference type="PDB" id="2EL4">
    <property type="method" value="NMR"/>
    <property type="chains" value="A=663-695"/>
</dbReference>
<dbReference type="PDB" id="2EL5">
    <property type="method" value="NMR"/>
    <property type="chains" value="A=749-777"/>
</dbReference>
<dbReference type="PDB" id="2EL6">
    <property type="method" value="NMR"/>
    <property type="chains" value="A=831-863"/>
</dbReference>
<dbReference type="PDB" id="2EM1">
    <property type="method" value="NMR"/>
    <property type="chains" value="A=637-667"/>
</dbReference>
<dbReference type="PDB" id="2EMV">
    <property type="method" value="NMR"/>
    <property type="chains" value="A=859-889"/>
</dbReference>
<dbReference type="PDB" id="2EMW">
    <property type="method" value="NMR"/>
    <property type="chains" value="A=301-331"/>
</dbReference>
<dbReference type="PDB" id="2EMX">
    <property type="method" value="NMR"/>
    <property type="chains" value="A=273-303"/>
</dbReference>
<dbReference type="PDB" id="2EMY">
    <property type="method" value="NMR"/>
    <property type="chains" value="A=551-583"/>
</dbReference>
<dbReference type="PDB" id="2EN0">
    <property type="method" value="NMR"/>
    <property type="chains" value="A=385-413"/>
</dbReference>
<dbReference type="PDB" id="2EN6">
    <property type="method" value="NMR"/>
    <property type="chains" value="A=887-919"/>
</dbReference>
<dbReference type="PDB" id="2EN7">
    <property type="method" value="NMR"/>
    <property type="chains" value="A=495-525"/>
</dbReference>
<dbReference type="PDB" id="2EOF">
    <property type="method" value="NMR"/>
    <property type="chains" value="A=411-441"/>
</dbReference>
<dbReference type="PDB" id="2EOG">
    <property type="method" value="NMR"/>
    <property type="chains" value="A=693-723"/>
</dbReference>
<dbReference type="PDB" id="2EOI">
    <property type="method" value="NMR"/>
    <property type="chains" value="A=329-359"/>
</dbReference>
<dbReference type="PDB" id="2EOJ">
    <property type="method" value="NMR"/>
    <property type="chains" value="A=355-385"/>
</dbReference>
<dbReference type="PDB" id="2EOK">
    <property type="method" value="NMR"/>
    <property type="chains" value="A=441-469"/>
</dbReference>
<dbReference type="PDB" id="2EOL">
    <property type="method" value="NMR"/>
    <property type="chains" value="A=581-609"/>
</dbReference>
<dbReference type="PDB" id="2EOP">
    <property type="method" value="NMR"/>
    <property type="chains" value="A=719-751"/>
</dbReference>
<dbReference type="PDB" id="2EPV">
    <property type="method" value="NMR"/>
    <property type="chains" value="A=803-833"/>
</dbReference>
<dbReference type="PDB" id="2EPW">
    <property type="method" value="NMR"/>
    <property type="chains" value="A=915-947"/>
</dbReference>
<dbReference type="PDB" id="2EPY">
    <property type="method" value="NMR"/>
    <property type="chains" value="A=525-553"/>
</dbReference>
<dbReference type="PDB" id="2YTF">
    <property type="method" value="NMR"/>
    <property type="chains" value="A=607-639"/>
</dbReference>
<dbReference type="PDB" id="2YTQ">
    <property type="method" value="NMR"/>
    <property type="chains" value="A=775-807"/>
</dbReference>
<dbReference type="PDBsum" id="2EL4"/>
<dbReference type="PDBsum" id="2EL5"/>
<dbReference type="PDBsum" id="2EL6"/>
<dbReference type="PDBsum" id="2EM1"/>
<dbReference type="PDBsum" id="2EMV"/>
<dbReference type="PDBsum" id="2EMW"/>
<dbReference type="PDBsum" id="2EMX"/>
<dbReference type="PDBsum" id="2EMY"/>
<dbReference type="PDBsum" id="2EN0"/>
<dbReference type="PDBsum" id="2EN6"/>
<dbReference type="PDBsum" id="2EN7"/>
<dbReference type="PDBsum" id="2EOF"/>
<dbReference type="PDBsum" id="2EOG"/>
<dbReference type="PDBsum" id="2EOI"/>
<dbReference type="PDBsum" id="2EOJ"/>
<dbReference type="PDBsum" id="2EOK"/>
<dbReference type="PDBsum" id="2EOL"/>
<dbReference type="PDBsum" id="2EOP"/>
<dbReference type="PDBsum" id="2EPV"/>
<dbReference type="PDBsum" id="2EPW"/>
<dbReference type="PDBsum" id="2EPY"/>
<dbReference type="PDBsum" id="2YTF"/>
<dbReference type="PDBsum" id="2YTQ"/>
<dbReference type="SMR" id="Q14587"/>
<dbReference type="BioGRID" id="116010">
    <property type="interactions" value="13"/>
</dbReference>
<dbReference type="FunCoup" id="Q14587">
    <property type="interactions" value="1110"/>
</dbReference>
<dbReference type="IntAct" id="Q14587">
    <property type="interactions" value="10"/>
</dbReference>
<dbReference type="STRING" id="9606.ENSP00000444412"/>
<dbReference type="iPTMnet" id="Q14587"/>
<dbReference type="PhosphoSitePlus" id="Q14587"/>
<dbReference type="BioMuta" id="ZNF268"/>
<dbReference type="DMDM" id="19863363"/>
<dbReference type="jPOST" id="Q14587"/>
<dbReference type="MassIVE" id="Q14587"/>
<dbReference type="PaxDb" id="9606-ENSP00000444412"/>
<dbReference type="PeptideAtlas" id="Q14587"/>
<dbReference type="ProteomicsDB" id="60060">
    <molecule id="Q14587-1"/>
</dbReference>
<dbReference type="ProteomicsDB" id="60061">
    <molecule id="Q14587-2"/>
</dbReference>
<dbReference type="Antibodypedia" id="834">
    <property type="antibodies" value="131 antibodies from 19 providers"/>
</dbReference>
<dbReference type="DNASU" id="10795"/>
<dbReference type="Ensembl" id="ENST00000228289.9">
    <molecule id="Q14587-1"/>
    <property type="protein sequence ID" value="ENSP00000228289.5"/>
    <property type="gene ID" value="ENSG00000090612.22"/>
</dbReference>
<dbReference type="Ensembl" id="ENST00000536435.7">
    <molecule id="Q14587-1"/>
    <property type="protein sequence ID" value="ENSP00000444412.3"/>
    <property type="gene ID" value="ENSG00000090612.22"/>
</dbReference>
<dbReference type="Ensembl" id="ENST00000539248.6">
    <molecule id="Q14587-6"/>
    <property type="protein sequence ID" value="ENSP00000467781.1"/>
    <property type="gene ID" value="ENSG00000090612.22"/>
</dbReference>
<dbReference type="Ensembl" id="ENST00000588312.2">
    <molecule id="Q14587-7"/>
    <property type="protein sequence ID" value="ENSP00000466622.1"/>
    <property type="gene ID" value="ENSG00000090612.22"/>
</dbReference>
<dbReference type="GeneID" id="10795"/>
<dbReference type="KEGG" id="hsa:10795"/>
<dbReference type="MANE-Select" id="ENST00000536435.7">
    <property type="protein sequence ID" value="ENSP00000444412.3"/>
    <property type="RefSeq nucleotide sequence ID" value="NM_003415.3"/>
    <property type="RefSeq protein sequence ID" value="NP_003406.1"/>
</dbReference>
<dbReference type="UCSC" id="uc010tbw.3">
    <molecule id="Q14587-1"/>
    <property type="organism name" value="human"/>
</dbReference>
<dbReference type="AGR" id="HGNC:13061"/>
<dbReference type="CTD" id="10795"/>
<dbReference type="DisGeNET" id="10795"/>
<dbReference type="GeneCards" id="ZNF268"/>
<dbReference type="HGNC" id="HGNC:13061">
    <property type="gene designation" value="ZNF268"/>
</dbReference>
<dbReference type="HPA" id="ENSG00000090612">
    <property type="expression patterns" value="Low tissue specificity"/>
</dbReference>
<dbReference type="MIM" id="604753">
    <property type="type" value="gene"/>
</dbReference>
<dbReference type="neXtProt" id="NX_Q14587"/>
<dbReference type="OpenTargets" id="ENSG00000090612"/>
<dbReference type="PharmGKB" id="PA37639"/>
<dbReference type="VEuPathDB" id="HostDB:ENSG00000090612"/>
<dbReference type="eggNOG" id="KOG1721">
    <property type="taxonomic scope" value="Eukaryota"/>
</dbReference>
<dbReference type="GeneTree" id="ENSGT00940000163459"/>
<dbReference type="HOGENOM" id="CLU_002678_17_1_1"/>
<dbReference type="InParanoid" id="Q14587"/>
<dbReference type="OMA" id="AKGYECT"/>
<dbReference type="OrthoDB" id="9411774at2759"/>
<dbReference type="PAN-GO" id="Q14587">
    <property type="GO annotations" value="4 GO annotations based on evolutionary models"/>
</dbReference>
<dbReference type="PhylomeDB" id="Q14587"/>
<dbReference type="PathwayCommons" id="Q14587"/>
<dbReference type="Reactome" id="R-HSA-212436">
    <property type="pathway name" value="Generic Transcription Pathway"/>
</dbReference>
<dbReference type="SignaLink" id="Q14587"/>
<dbReference type="SIGNOR" id="Q14587"/>
<dbReference type="BioGRID-ORCS" id="10795">
    <property type="hits" value="12 hits in 1181 CRISPR screens"/>
</dbReference>
<dbReference type="ChiTaRS" id="ZNF268">
    <property type="organism name" value="human"/>
</dbReference>
<dbReference type="EvolutionaryTrace" id="Q14587"/>
<dbReference type="GeneWiki" id="ZNF268"/>
<dbReference type="GenomeRNAi" id="10795"/>
<dbReference type="Pharos" id="Q14587">
    <property type="development level" value="Tbio"/>
</dbReference>
<dbReference type="PRO" id="PR:Q14587"/>
<dbReference type="Proteomes" id="UP000005640">
    <property type="component" value="Chromosome 12"/>
</dbReference>
<dbReference type="RNAct" id="Q14587">
    <property type="molecule type" value="protein"/>
</dbReference>
<dbReference type="Bgee" id="ENSG00000090612">
    <property type="expression patterns" value="Expressed in adrenal tissue and 193 other cell types or tissues"/>
</dbReference>
<dbReference type="ExpressionAtlas" id="Q14587">
    <property type="expression patterns" value="baseline and differential"/>
</dbReference>
<dbReference type="GO" id="GO:0005737">
    <property type="term" value="C:cytoplasm"/>
    <property type="evidence" value="ECO:0000314"/>
    <property type="project" value="UniProtKB"/>
</dbReference>
<dbReference type="GO" id="GO:0005829">
    <property type="term" value="C:cytosol"/>
    <property type="evidence" value="ECO:0000314"/>
    <property type="project" value="HPA"/>
</dbReference>
<dbReference type="GO" id="GO:0005634">
    <property type="term" value="C:nucleus"/>
    <property type="evidence" value="ECO:0000314"/>
    <property type="project" value="UniProtKB"/>
</dbReference>
<dbReference type="GO" id="GO:0003677">
    <property type="term" value="F:DNA binding"/>
    <property type="evidence" value="ECO:0000303"/>
    <property type="project" value="UniProtKB"/>
</dbReference>
<dbReference type="GO" id="GO:0003700">
    <property type="term" value="F:DNA-binding transcription factor activity"/>
    <property type="evidence" value="ECO:0000303"/>
    <property type="project" value="UniProtKB"/>
</dbReference>
<dbReference type="GO" id="GO:0008270">
    <property type="term" value="F:zinc ion binding"/>
    <property type="evidence" value="ECO:0007669"/>
    <property type="project" value="UniProtKB-KW"/>
</dbReference>
<dbReference type="GO" id="GO:0030154">
    <property type="term" value="P:cell differentiation"/>
    <property type="evidence" value="ECO:0007669"/>
    <property type="project" value="UniProtKB-KW"/>
</dbReference>
<dbReference type="GO" id="GO:0071356">
    <property type="term" value="P:cellular response to tumor necrosis factor"/>
    <property type="evidence" value="ECO:0000314"/>
    <property type="project" value="UniProtKB"/>
</dbReference>
<dbReference type="GO" id="GO:0043066">
    <property type="term" value="P:negative regulation of apoptotic process"/>
    <property type="evidence" value="ECO:0000315"/>
    <property type="project" value="UniProtKB"/>
</dbReference>
<dbReference type="GO" id="GO:0008285">
    <property type="term" value="P:negative regulation of cell population proliferation"/>
    <property type="evidence" value="ECO:0000315"/>
    <property type="project" value="UniProtKB"/>
</dbReference>
<dbReference type="GO" id="GO:0000122">
    <property type="term" value="P:negative regulation of transcription by RNA polymerase II"/>
    <property type="evidence" value="ECO:0000314"/>
    <property type="project" value="UniProtKB"/>
</dbReference>
<dbReference type="GO" id="GO:0043065">
    <property type="term" value="P:positive regulation of apoptotic process"/>
    <property type="evidence" value="ECO:0000315"/>
    <property type="project" value="UniProtKB"/>
</dbReference>
<dbReference type="GO" id="GO:0045597">
    <property type="term" value="P:positive regulation of cell differentiation"/>
    <property type="evidence" value="ECO:0000315"/>
    <property type="project" value="UniProtKB"/>
</dbReference>
<dbReference type="GO" id="GO:0030335">
    <property type="term" value="P:positive regulation of cell migration"/>
    <property type="evidence" value="ECO:0000315"/>
    <property type="project" value="UniProtKB"/>
</dbReference>
<dbReference type="GO" id="GO:0008284">
    <property type="term" value="P:positive regulation of cell population proliferation"/>
    <property type="evidence" value="ECO:0000315"/>
    <property type="project" value="UniProtKB"/>
</dbReference>
<dbReference type="GO" id="GO:1901224">
    <property type="term" value="P:positive regulation of non-canonical NF-kappaB signal transduction"/>
    <property type="evidence" value="ECO:0000314"/>
    <property type="project" value="UniProtKB"/>
</dbReference>
<dbReference type="GO" id="GO:0045732">
    <property type="term" value="P:positive regulation of protein catabolic process"/>
    <property type="evidence" value="ECO:0000314"/>
    <property type="project" value="UniProtKB"/>
</dbReference>
<dbReference type="GO" id="GO:0001934">
    <property type="term" value="P:positive regulation of protein phosphorylation"/>
    <property type="evidence" value="ECO:0000314"/>
    <property type="project" value="UniProtKB"/>
</dbReference>
<dbReference type="GO" id="GO:0045944">
    <property type="term" value="P:positive regulation of transcription by RNA polymerase II"/>
    <property type="evidence" value="ECO:0000314"/>
    <property type="project" value="UniProtKB"/>
</dbReference>
<dbReference type="GO" id="GO:0051726">
    <property type="term" value="P:regulation of cell cycle"/>
    <property type="evidence" value="ECO:0000315"/>
    <property type="project" value="UniProtKB"/>
</dbReference>
<dbReference type="GO" id="GO:0006355">
    <property type="term" value="P:regulation of DNA-templated transcription"/>
    <property type="evidence" value="ECO:0000303"/>
    <property type="project" value="UniProtKB"/>
</dbReference>
<dbReference type="GO" id="GO:0007346">
    <property type="term" value="P:regulation of mitotic cell cycle"/>
    <property type="evidence" value="ECO:0000315"/>
    <property type="project" value="UniProtKB"/>
</dbReference>
<dbReference type="GO" id="GO:0006357">
    <property type="term" value="P:regulation of transcription by RNA polymerase II"/>
    <property type="evidence" value="ECO:0000318"/>
    <property type="project" value="GO_Central"/>
</dbReference>
<dbReference type="CDD" id="cd07765">
    <property type="entry name" value="KRAB_A-box"/>
    <property type="match status" value="1"/>
</dbReference>
<dbReference type="FunFam" id="3.30.160.60:FF:000478">
    <property type="entry name" value="Zinc finger protein 133"/>
    <property type="match status" value="2"/>
</dbReference>
<dbReference type="FunFam" id="3.30.160.60:FF:000053">
    <property type="entry name" value="zinc finger protein 182 isoform X1"/>
    <property type="match status" value="1"/>
</dbReference>
<dbReference type="FunFam" id="3.30.160.60:FF:000295">
    <property type="entry name" value="zinc finger protein 19"/>
    <property type="match status" value="4"/>
</dbReference>
<dbReference type="FunFam" id="3.30.160.60:FF:000622">
    <property type="entry name" value="zinc finger protein 26 isoform X3"/>
    <property type="match status" value="4"/>
</dbReference>
<dbReference type="FunFam" id="3.30.160.60:FF:001530">
    <property type="entry name" value="Zinc finger protein 268"/>
    <property type="match status" value="1"/>
</dbReference>
<dbReference type="FunFam" id="3.30.160.60:FF:002375">
    <property type="entry name" value="Zinc finger protein 268"/>
    <property type="match status" value="1"/>
</dbReference>
<dbReference type="FunFam" id="3.30.160.60:FF:000128">
    <property type="entry name" value="zinc finger protein 268 isoform X1"/>
    <property type="match status" value="5"/>
</dbReference>
<dbReference type="FunFam" id="3.30.160.60:FF:000003">
    <property type="entry name" value="Zinc finger protein 3 homolog"/>
    <property type="match status" value="2"/>
</dbReference>
<dbReference type="FunFam" id="3.30.160.60:FF:000016">
    <property type="entry name" value="zinc finger protein 37 homolog"/>
    <property type="match status" value="1"/>
</dbReference>
<dbReference type="FunFam" id="3.30.160.60:FF:002254">
    <property type="entry name" value="Zinc finger protein 540"/>
    <property type="match status" value="1"/>
</dbReference>
<dbReference type="FunFam" id="3.30.160.60:FF:000953">
    <property type="entry name" value="Zinc finger protein 691"/>
    <property type="match status" value="1"/>
</dbReference>
<dbReference type="FunFam" id="3.30.160.60:FF:000320">
    <property type="entry name" value="Zinc finger protein 777"/>
    <property type="match status" value="1"/>
</dbReference>
<dbReference type="Gene3D" id="6.10.140.140">
    <property type="match status" value="1"/>
</dbReference>
<dbReference type="Gene3D" id="3.30.160.60">
    <property type="entry name" value="Classic Zinc Finger"/>
    <property type="match status" value="24"/>
</dbReference>
<dbReference type="InterPro" id="IPR001909">
    <property type="entry name" value="KRAB"/>
</dbReference>
<dbReference type="InterPro" id="IPR036051">
    <property type="entry name" value="KRAB_dom_sf"/>
</dbReference>
<dbReference type="InterPro" id="IPR056436">
    <property type="entry name" value="Znf-C2H2_ZIC1-5/GLI1-3-like"/>
</dbReference>
<dbReference type="InterPro" id="IPR050758">
    <property type="entry name" value="Znf_C2H2-type"/>
</dbReference>
<dbReference type="InterPro" id="IPR036236">
    <property type="entry name" value="Znf_C2H2_sf"/>
</dbReference>
<dbReference type="InterPro" id="IPR013087">
    <property type="entry name" value="Znf_C2H2_type"/>
</dbReference>
<dbReference type="PANTHER" id="PTHR23234:SF10">
    <property type="entry name" value="RIKEN CDNA 6720489N17 GENE-RELATED"/>
    <property type="match status" value="1"/>
</dbReference>
<dbReference type="PANTHER" id="PTHR23234">
    <property type="entry name" value="ZNF44 PROTEIN"/>
    <property type="match status" value="1"/>
</dbReference>
<dbReference type="Pfam" id="PF01352">
    <property type="entry name" value="KRAB"/>
    <property type="match status" value="1"/>
</dbReference>
<dbReference type="Pfam" id="PF00096">
    <property type="entry name" value="zf-C2H2"/>
    <property type="match status" value="22"/>
</dbReference>
<dbReference type="Pfam" id="PF23561">
    <property type="entry name" value="zf-C2H2_15"/>
    <property type="match status" value="1"/>
</dbReference>
<dbReference type="SMART" id="SM00349">
    <property type="entry name" value="KRAB"/>
    <property type="match status" value="1"/>
</dbReference>
<dbReference type="SMART" id="SM00355">
    <property type="entry name" value="ZnF_C2H2"/>
    <property type="match status" value="24"/>
</dbReference>
<dbReference type="SUPFAM" id="SSF57667">
    <property type="entry name" value="beta-beta-alpha zinc fingers"/>
    <property type="match status" value="12"/>
</dbReference>
<dbReference type="SUPFAM" id="SSF109640">
    <property type="entry name" value="KRAB domain (Kruppel-associated box)"/>
    <property type="match status" value="1"/>
</dbReference>
<dbReference type="PROSITE" id="PS50805">
    <property type="entry name" value="KRAB"/>
    <property type="match status" value="1"/>
</dbReference>
<dbReference type="PROSITE" id="PS00028">
    <property type="entry name" value="ZINC_FINGER_C2H2_1"/>
    <property type="match status" value="24"/>
</dbReference>
<dbReference type="PROSITE" id="PS50157">
    <property type="entry name" value="ZINC_FINGER_C2H2_2"/>
    <property type="match status" value="24"/>
</dbReference>
<protein>
    <recommendedName>
        <fullName>Zinc finger protein 268</fullName>
    </recommendedName>
    <alternativeName>
        <fullName>Zinc finger protein HZF3</fullName>
    </alternativeName>
</protein>
<keyword id="KW-0002">3D-structure</keyword>
<keyword id="KW-0025">Alternative splicing</keyword>
<keyword id="KW-0963">Cytoplasm</keyword>
<keyword id="KW-0221">Differentiation</keyword>
<keyword id="KW-0238">DNA-binding</keyword>
<keyword id="KW-0479">Metal-binding</keyword>
<keyword id="KW-0539">Nucleus</keyword>
<keyword id="KW-0597">Phosphoprotein</keyword>
<keyword id="KW-1267">Proteomics identification</keyword>
<keyword id="KW-1185">Reference proteome</keyword>
<keyword id="KW-0677">Repeat</keyword>
<keyword id="KW-0678">Repressor</keyword>
<keyword id="KW-0804">Transcription</keyword>
<keyword id="KW-0805">Transcription regulation</keyword>
<keyword id="KW-0862">Zinc</keyword>
<keyword id="KW-0863">Zinc-finger</keyword>
<organism>
    <name type="scientific">Homo sapiens</name>
    <name type="common">Human</name>
    <dbReference type="NCBI Taxonomy" id="9606"/>
    <lineage>
        <taxon>Eukaryota</taxon>
        <taxon>Metazoa</taxon>
        <taxon>Chordata</taxon>
        <taxon>Craniata</taxon>
        <taxon>Vertebrata</taxon>
        <taxon>Euteleostomi</taxon>
        <taxon>Mammalia</taxon>
        <taxon>Eutheria</taxon>
        <taxon>Euarchontoglires</taxon>
        <taxon>Primates</taxon>
        <taxon>Haplorrhini</taxon>
        <taxon>Catarrhini</taxon>
        <taxon>Hominidae</taxon>
        <taxon>Homo</taxon>
    </lineage>
</organism>
<proteinExistence type="evidence at protein level"/>
<reference key="1">
    <citation type="journal article" date="2001" name="Biochim. Biophys. Acta">
        <title>Cloning and characterization of a novel Kruppel-like zinc finger gene, ZNF268, expressed in early human embryo.</title>
        <authorList>
            <person name="Gou D.M."/>
            <person name="Sun Y."/>
            <person name="Gao L."/>
            <person name="Chow L.M.C."/>
            <person name="Huang J."/>
            <person name="Feng Y.D."/>
            <person name="Jiang D.H."/>
            <person name="Li W.X."/>
        </authorList>
    </citation>
    <scope>NUCLEOTIDE SEQUENCE [MRNA] (ISOFORMS 1 AND 2)</scope>
    <source>
        <tissue>Embryo</tissue>
    </source>
</reference>
<reference key="2">
    <citation type="journal article" date="2002" name="Blood">
        <title>Identification of tumor-associated antigens in chronic lymphocytic leukemia by SEREX.</title>
        <authorList>
            <person name="Krackhardt A.M."/>
            <person name="Witzens M."/>
            <person name="Harig S."/>
            <person name="Hodi F.S."/>
            <person name="Zauls A.J."/>
            <person name="Chessia M."/>
            <person name="Barrett P."/>
            <person name="Gribben J.G."/>
        </authorList>
    </citation>
    <scope>NUCLEOTIDE SEQUENCE [MRNA] (ISOFORMS 1 AND 2)</scope>
    <scope>TISSUE SPECIFICITY</scope>
</reference>
<reference key="3">
    <citation type="journal article" date="2006" name="Int. J. Mol. Med.">
        <title>KRAB-containing zinc finger gene ZNF268 encodes multiple alternatively spliced isoforms that contain transcription regulatory domains.</title>
        <authorList>
            <person name="Shao H."/>
            <person name="Zhu C."/>
            <person name="Zhao Z."/>
            <person name="Guo M."/>
            <person name="Qiu H."/>
            <person name="Liu H."/>
            <person name="Wang D."/>
            <person name="Xue L."/>
            <person name="Gao L."/>
            <person name="Sun C."/>
            <person name="Li W."/>
        </authorList>
    </citation>
    <scope>NUCLEOTIDE SEQUENCE [MRNA] (ISOFORMS 3; 4; 5; 6 AND 7)</scope>
    <scope>TISSUE SPECIFICITY</scope>
</reference>
<reference key="4">
    <citation type="journal article" date="2008" name="Oncol. Rep.">
        <title>Aberrant alternative splicing of human zinc finger gene ZNF268 in human hematological malignancy.</title>
        <authorList>
            <person name="Zhao Z."/>
            <person name="Wang D."/>
            <person name="Zhu C."/>
            <person name="Shao H."/>
            <person name="Sun C."/>
            <person name="Qiu H."/>
            <person name="Xue L."/>
            <person name="Xu J."/>
            <person name="Guo M."/>
            <person name="Li W."/>
        </authorList>
    </citation>
    <scope>NUCLEOTIDE SEQUENCE [MRNA] (ISOFORMS 3; 4; 5; 6 AND 7)</scope>
    <scope>TISSUE SPECIFICITY</scope>
</reference>
<reference key="5">
    <citation type="journal article" date="2006" name="Nature">
        <title>The finished DNA sequence of human chromosome 12.</title>
        <authorList>
            <person name="Scherer S.E."/>
            <person name="Muzny D.M."/>
            <person name="Buhay C.J."/>
            <person name="Chen R."/>
            <person name="Cree A."/>
            <person name="Ding Y."/>
            <person name="Dugan-Rocha S."/>
            <person name="Gill R."/>
            <person name="Gunaratne P."/>
            <person name="Harris R.A."/>
            <person name="Hawes A.C."/>
            <person name="Hernandez J."/>
            <person name="Hodgson A.V."/>
            <person name="Hume J."/>
            <person name="Jackson A."/>
            <person name="Khan Z.M."/>
            <person name="Kovar-Smith C."/>
            <person name="Lewis L.R."/>
            <person name="Lozado R.J."/>
            <person name="Metzker M.L."/>
            <person name="Milosavljevic A."/>
            <person name="Miner G.R."/>
            <person name="Montgomery K.T."/>
            <person name="Morgan M.B."/>
            <person name="Nazareth L.V."/>
            <person name="Scott G."/>
            <person name="Sodergren E."/>
            <person name="Song X.-Z."/>
            <person name="Steffen D."/>
            <person name="Lovering R.C."/>
            <person name="Wheeler D.A."/>
            <person name="Worley K.C."/>
            <person name="Yuan Y."/>
            <person name="Zhang Z."/>
            <person name="Adams C.Q."/>
            <person name="Ansari-Lari M.A."/>
            <person name="Ayele M."/>
            <person name="Brown M.J."/>
            <person name="Chen G."/>
            <person name="Chen Z."/>
            <person name="Clerc-Blankenburg K.P."/>
            <person name="Davis C."/>
            <person name="Delgado O."/>
            <person name="Dinh H.H."/>
            <person name="Draper H."/>
            <person name="Gonzalez-Garay M.L."/>
            <person name="Havlak P."/>
            <person name="Jackson L.R."/>
            <person name="Jacob L.S."/>
            <person name="Kelly S.H."/>
            <person name="Li L."/>
            <person name="Li Z."/>
            <person name="Liu J."/>
            <person name="Liu W."/>
            <person name="Lu J."/>
            <person name="Maheshwari M."/>
            <person name="Nguyen B.-V."/>
            <person name="Okwuonu G.O."/>
            <person name="Pasternak S."/>
            <person name="Perez L.M."/>
            <person name="Plopper F.J.H."/>
            <person name="Santibanez J."/>
            <person name="Shen H."/>
            <person name="Tabor P.E."/>
            <person name="Verduzco D."/>
            <person name="Waldron L."/>
            <person name="Wang Q."/>
            <person name="Williams G.A."/>
            <person name="Zhang J."/>
            <person name="Zhou J."/>
            <person name="Allen C.C."/>
            <person name="Amin A.G."/>
            <person name="Anyalebechi V."/>
            <person name="Bailey M."/>
            <person name="Barbaria J.A."/>
            <person name="Bimage K.E."/>
            <person name="Bryant N.P."/>
            <person name="Burch P.E."/>
            <person name="Burkett C.E."/>
            <person name="Burrell K.L."/>
            <person name="Calderon E."/>
            <person name="Cardenas V."/>
            <person name="Carter K."/>
            <person name="Casias K."/>
            <person name="Cavazos I."/>
            <person name="Cavazos S.R."/>
            <person name="Ceasar H."/>
            <person name="Chacko J."/>
            <person name="Chan S.N."/>
            <person name="Chavez D."/>
            <person name="Christopoulos C."/>
            <person name="Chu J."/>
            <person name="Cockrell R."/>
            <person name="Cox C.D."/>
            <person name="Dang M."/>
            <person name="Dathorne S.R."/>
            <person name="David R."/>
            <person name="Davis C.M."/>
            <person name="Davy-Carroll L."/>
            <person name="Deshazo D.R."/>
            <person name="Donlin J.E."/>
            <person name="D'Souza L."/>
            <person name="Eaves K.A."/>
            <person name="Egan A."/>
            <person name="Emery-Cohen A.J."/>
            <person name="Escotto M."/>
            <person name="Flagg N."/>
            <person name="Forbes L.D."/>
            <person name="Gabisi A.M."/>
            <person name="Garza M."/>
            <person name="Hamilton C."/>
            <person name="Henderson N."/>
            <person name="Hernandez O."/>
            <person name="Hines S."/>
            <person name="Hogues M.E."/>
            <person name="Huang M."/>
            <person name="Idlebird D.G."/>
            <person name="Johnson R."/>
            <person name="Jolivet A."/>
            <person name="Jones S."/>
            <person name="Kagan R."/>
            <person name="King L.M."/>
            <person name="Leal B."/>
            <person name="Lebow H."/>
            <person name="Lee S."/>
            <person name="LeVan J.M."/>
            <person name="Lewis L.C."/>
            <person name="London P."/>
            <person name="Lorensuhewa L.M."/>
            <person name="Loulseged H."/>
            <person name="Lovett D.A."/>
            <person name="Lucier A."/>
            <person name="Lucier R.L."/>
            <person name="Ma J."/>
            <person name="Madu R.C."/>
            <person name="Mapua P."/>
            <person name="Martindale A.D."/>
            <person name="Martinez E."/>
            <person name="Massey E."/>
            <person name="Mawhiney S."/>
            <person name="Meador M.G."/>
            <person name="Mendez S."/>
            <person name="Mercado C."/>
            <person name="Mercado I.C."/>
            <person name="Merritt C.E."/>
            <person name="Miner Z.L."/>
            <person name="Minja E."/>
            <person name="Mitchell T."/>
            <person name="Mohabbat F."/>
            <person name="Mohabbat K."/>
            <person name="Montgomery B."/>
            <person name="Moore N."/>
            <person name="Morris S."/>
            <person name="Munidasa M."/>
            <person name="Ngo R.N."/>
            <person name="Nguyen N.B."/>
            <person name="Nickerson E."/>
            <person name="Nwaokelemeh O.O."/>
            <person name="Nwokenkwo S."/>
            <person name="Obregon M."/>
            <person name="Oguh M."/>
            <person name="Oragunye N."/>
            <person name="Oviedo R.J."/>
            <person name="Parish B.J."/>
            <person name="Parker D.N."/>
            <person name="Parrish J."/>
            <person name="Parks K.L."/>
            <person name="Paul H.A."/>
            <person name="Payton B.A."/>
            <person name="Perez A."/>
            <person name="Perrin W."/>
            <person name="Pickens A."/>
            <person name="Primus E.L."/>
            <person name="Pu L.-L."/>
            <person name="Puazo M."/>
            <person name="Quiles M.M."/>
            <person name="Quiroz J.B."/>
            <person name="Rabata D."/>
            <person name="Reeves K."/>
            <person name="Ruiz S.J."/>
            <person name="Shao H."/>
            <person name="Sisson I."/>
            <person name="Sonaike T."/>
            <person name="Sorelle R.P."/>
            <person name="Sutton A.E."/>
            <person name="Svatek A.F."/>
            <person name="Svetz L.A."/>
            <person name="Tamerisa K.S."/>
            <person name="Taylor T.R."/>
            <person name="Teague B."/>
            <person name="Thomas N."/>
            <person name="Thorn R.D."/>
            <person name="Trejos Z.Y."/>
            <person name="Trevino B.K."/>
            <person name="Ukegbu O.N."/>
            <person name="Urban J.B."/>
            <person name="Vasquez L.I."/>
            <person name="Vera V.A."/>
            <person name="Villasana D.M."/>
            <person name="Wang L."/>
            <person name="Ward-Moore S."/>
            <person name="Warren J.T."/>
            <person name="Wei X."/>
            <person name="White F."/>
            <person name="Williamson A.L."/>
            <person name="Wleczyk R."/>
            <person name="Wooden H.S."/>
            <person name="Wooden S.H."/>
            <person name="Yen J."/>
            <person name="Yoon L."/>
            <person name="Yoon V."/>
            <person name="Zorrilla S.E."/>
            <person name="Nelson D."/>
            <person name="Kucherlapati R."/>
            <person name="Weinstock G."/>
            <person name="Gibbs R.A."/>
        </authorList>
    </citation>
    <scope>NUCLEOTIDE SEQUENCE [LARGE SCALE GENOMIC DNA]</scope>
</reference>
<reference key="6">
    <citation type="journal article" date="1995" name="DNA Cell Biol.">
        <title>Isolation of cDNA clones for 42 different Kruppel-related zinc finger proteins expressed in the human monoblast cell line U-937.</title>
        <authorList>
            <person name="Abrink M."/>
            <person name="Aveskogh M."/>
            <person name="Hellman L."/>
        </authorList>
    </citation>
    <scope>NUCLEOTIDE SEQUENCE [MRNA] OF 549-947</scope>
</reference>
<reference key="7">
    <citation type="journal article" date="2003" name="IUBMB Life">
        <title>The KRAB domain of zinc finger gene ZNF268: a potential transcriptional repressor.</title>
        <authorList>
            <person name="Sun Y."/>
            <person name="Gou D.M."/>
            <person name="Liu H."/>
            <person name="Peng X."/>
            <person name="Li W.X."/>
        </authorList>
    </citation>
    <scope>FUNCTION (ISOFORM 1)</scope>
    <scope>SUBCELLULAR LOCATION</scope>
</reference>
<reference key="8">
    <citation type="journal article" date="2004" name="Int. J. Mol. Med.">
        <title>ZNF268, a novel kruppel-like zinc finger protein, is implicated in early human liver development.</title>
        <authorList>
            <person name="Sun Y."/>
            <person name="Shao H."/>
            <person name="Li Z."/>
            <person name="Liu J."/>
            <person name="Gao L."/>
            <person name="Peng X."/>
            <person name="Meng Y."/>
            <person name="Li W."/>
        </authorList>
    </citation>
    <scope>FUNCTION</scope>
    <scope>SUBCELLULAR LOCATION</scope>
    <scope>DEVELOPMENTAL STAGE</scope>
</reference>
<reference key="9">
    <citation type="journal article" date="2006" name="J. Biol. Chem.">
        <title>Transcription of human zinc finger ZNF268 gene requires an intragenic promoter element.</title>
        <authorList>
            <person name="Guo M.X."/>
            <person name="Wang D."/>
            <person name="Shao H.J."/>
            <person name="Qiu H.L."/>
            <person name="Xue L."/>
            <person name="Zhao Z.Z."/>
            <person name="Zhu C.G."/>
            <person name="Shi Y.B."/>
            <person name="Li W.X."/>
        </authorList>
    </citation>
    <scope>INDUCTION BY ATF4</scope>
</reference>
<reference key="10">
    <citation type="journal article" date="2006" name="Yi Chuan">
        <title>Cloning and characterization of two novel alternatively spliced transcripts of ZNF268.</title>
        <authorList>
            <person name="Sun C."/>
            <person name="Zhao Z.Z."/>
            <person name="Gao L."/>
            <person name="Sun Y."/>
            <person name="Shao H.J."/>
            <person name="Li W.X."/>
        </authorList>
    </citation>
    <scope>ALTERNATIVE SPLICING</scope>
    <scope>TISSUE SPECIFICITY</scope>
    <scope>DEVELOPMENTAL STAGE</scope>
</reference>
<reference key="11">
    <citation type="journal article" date="2008" name="Biochemistry (Mosc.)">
        <title>The mammalian gene ZNF268 is regulated by hUpf1.</title>
        <authorList>
            <person name="Zhu C."/>
            <person name="Zhao Z."/>
            <person name="Guo M."/>
            <person name="Shao H."/>
            <person name="Qiu H."/>
            <person name="Wang D."/>
            <person name="Xu J."/>
            <person name="Xue L."/>
            <person name="Li W."/>
        </authorList>
    </citation>
    <scope>INDUCTION BY UPF1</scope>
</reference>
<reference key="12">
    <citation type="journal article" date="2008" name="J. Biol. Chem.">
        <title>Human T-cell leukemia virus type 1 oncoprotein tax represses ZNF268 expression through the cAMP-responsive element-binding protein/activating transcription factor pathway.</title>
        <authorList>
            <person name="Wang D."/>
            <person name="Guo M.X."/>
            <person name="Hu H.M."/>
            <person name="Zhao Z.Z."/>
            <person name="Qiu H.L."/>
            <person name="Shao H.J."/>
            <person name="Zhu C.G."/>
            <person name="Xue L."/>
            <person name="Shi Y.B."/>
            <person name="Li W.X."/>
        </authorList>
    </citation>
    <scope>INDUCTION BY HTLV-1 TAX</scope>
</reference>
<reference key="13">
    <citation type="journal article" date="2008" name="Mol. Cells">
        <title>A splice variant of the C(2)H(2)-type zinc finger protein, ZNF268s, regulates NF-kappaB activation by TNF-alpha.</title>
        <authorList>
            <person name="Chun J.N."/>
            <person name="Song I.S."/>
            <person name="Kang D.H."/>
            <person name="Song H.J."/>
            <person name="Kim H.I."/>
            <person name="Seo J."/>
            <person name="Suh J.W."/>
            <person name="Lee K.J."/>
            <person name="Lee K.J."/>
            <person name="Kim J."/>
            <person name="Kang S.W."/>
        </authorList>
    </citation>
    <scope>FUNCTION</scope>
    <scope>ALTERNATIVE SPLICING (ISOFORMS 1 AND 2)</scope>
    <scope>SUBCELLULAR LOCATION</scope>
    <scope>IDENTIFICATION BY MASS SPECTROMETRY</scope>
</reference>
<reference key="14">
    <citation type="journal article" date="2012" name="J. Biol. Chem.">
        <title>The zinc finger protein ZNF268 is overexpressed in human cervical cancer and contributes to tumorigenesis via enhancing NF-kappaB signaling.</title>
        <authorList>
            <person name="Wang W."/>
            <person name="Guo M."/>
            <person name="Hu L."/>
            <person name="Cai J."/>
            <person name="Zeng Y."/>
            <person name="Luo J."/>
            <person name="Shu Z."/>
            <person name="Li W."/>
            <person name="Huang Z."/>
        </authorList>
    </citation>
    <scope>FUNCTION (ISOFORMS 1 AND 2)</scope>
    <scope>INTERACTION WITH CHUK AND IKBKB</scope>
    <scope>TISSUE SPECIFICITY</scope>
</reference>
<reference key="15">
    <citation type="journal article" date="2012" name="PLoS ONE">
        <title>Knockdown of ZNF268, which is transcriptionally downregulated by GATA-1, promotes proliferation of K562 cells.</title>
        <authorList>
            <person name="Zeng Y."/>
            <person name="Wang W."/>
            <person name="Ma J."/>
            <person name="Wang X."/>
            <person name="Guo M."/>
            <person name="Li W."/>
        </authorList>
    </citation>
    <scope>FUNCTION</scope>
    <scope>INDUCTION</scope>
</reference>
<reference key="16">
    <citation type="journal article" date="2013" name="Cell. Mol. Life Sci.">
        <title>Novel activity of KRAB domain that functions to reinforce nuclear localization of KRAB-containing zinc finger proteins by interacting with KAP1.</title>
        <authorList>
            <person name="Wang W."/>
            <person name="Cai J."/>
            <person name="Wu Y."/>
            <person name="Hu L."/>
            <person name="Chen Z."/>
            <person name="Hu J."/>
            <person name="Chen Z."/>
            <person name="Li W."/>
            <person name="Guo M."/>
            <person name="Huang Z."/>
        </authorList>
    </citation>
    <scope>INTERACTION WITH TRIM28</scope>
    <scope>SUBCELLULAR LOCATION (ISOFORMS 1 AND 2)</scope>
    <scope>MUTAGENESIS OF ASP-85; VAL-86; VAL-88; PHE-90; GLU-93; GLU-94 AND TRP-95</scope>
</reference>
<reference key="17">
    <citation type="journal article" date="2013" name="Oncol. Lett.">
        <title>Aberrant expression of ZNF268 alters the growth and migration of ovarian cancer cells.</title>
        <authorList>
            <person name="Hu L."/>
            <person name="Wang W."/>
            <person name="Cai J."/>
            <person name="Luo J."/>
            <person name="Huang Y."/>
            <person name="Xiong S."/>
            <person name="Li W."/>
            <person name="Guo M."/>
        </authorList>
    </citation>
    <scope>FUNCTION</scope>
    <scope>TISSUE SPECIFICITY</scope>
</reference>
<reference key="18">
    <citation type="submission" date="2007-10" db="PDB data bank">
        <title>Solution structure of the C2H2 type zinc finger region of human zinc finger protein 268.</title>
        <authorList>
            <consortium name="RIKEN structural genomics initiative (RSGI)"/>
        </authorList>
    </citation>
    <scope>STRUCTURE BY NMR OF 272-947</scope>
</reference>
<reference key="19">
    <citation type="journal article" date="2023" name="J. Biol. Chem.">
        <title>TBK1-stabilized ZNF268a recruits SETD4 to methylate TBK1 for efficient interferon signaling.</title>
        <authorList>
            <person name="Liu Y."/>
            <person name="Yin W."/>
            <person name="Zeng X."/>
            <person name="Fan J."/>
            <person name="Liu C."/>
            <person name="Gao M."/>
            <person name="Huang Z."/>
            <person name="Sun G."/>
            <person name="Guo M."/>
        </authorList>
    </citation>
    <scope>FUNCTION</scope>
    <scope>SUBCELLULAR LOCATION</scope>
    <scope>PHOSPHORYLATION AT SER-178</scope>
    <scope>MUTAGENESIS OF SER-178</scope>
    <scope>INTERACTION WITH TOLLIP</scope>
</reference>